<comment type="function">
    <text evidence="1">Catalyzes the reversible phosphorylation of UMP to UDP.</text>
</comment>
<comment type="catalytic activity">
    <reaction evidence="1">
        <text>UMP + ATP = UDP + ADP</text>
        <dbReference type="Rhea" id="RHEA:24400"/>
        <dbReference type="ChEBI" id="CHEBI:30616"/>
        <dbReference type="ChEBI" id="CHEBI:57865"/>
        <dbReference type="ChEBI" id="CHEBI:58223"/>
        <dbReference type="ChEBI" id="CHEBI:456216"/>
        <dbReference type="EC" id="2.7.4.22"/>
    </reaction>
</comment>
<comment type="activity regulation">
    <text evidence="1">Allosterically activated by GTP. Inhibited by UTP.</text>
</comment>
<comment type="pathway">
    <text evidence="1">Pyrimidine metabolism; CTP biosynthesis via de novo pathway; UDP from UMP (UMPK route): step 1/1.</text>
</comment>
<comment type="subunit">
    <text evidence="1">Homohexamer.</text>
</comment>
<comment type="subcellular location">
    <subcellularLocation>
        <location evidence="1">Cytoplasm</location>
    </subcellularLocation>
</comment>
<comment type="similarity">
    <text evidence="1">Belongs to the UMP kinase family.</text>
</comment>
<reference key="1">
    <citation type="journal article" date="2004" name="Nature">
        <title>Genome sequence of Silicibacter pomeroyi reveals adaptations to the marine environment.</title>
        <authorList>
            <person name="Moran M.A."/>
            <person name="Buchan A."/>
            <person name="Gonzalez J.M."/>
            <person name="Heidelberg J.F."/>
            <person name="Whitman W.B."/>
            <person name="Kiene R.P."/>
            <person name="Henriksen J.R."/>
            <person name="King G.M."/>
            <person name="Belas R."/>
            <person name="Fuqua C."/>
            <person name="Brinkac L.M."/>
            <person name="Lewis M."/>
            <person name="Johri S."/>
            <person name="Weaver B."/>
            <person name="Pai G."/>
            <person name="Eisen J.A."/>
            <person name="Rahe E."/>
            <person name="Sheldon W.M."/>
            <person name="Ye W."/>
            <person name="Miller T.R."/>
            <person name="Carlton J."/>
            <person name="Rasko D.A."/>
            <person name="Paulsen I.T."/>
            <person name="Ren Q."/>
            <person name="Daugherty S.C."/>
            <person name="DeBoy R.T."/>
            <person name="Dodson R.J."/>
            <person name="Durkin A.S."/>
            <person name="Madupu R."/>
            <person name="Nelson W.C."/>
            <person name="Sullivan S.A."/>
            <person name="Rosovitz M.J."/>
            <person name="Haft D.H."/>
            <person name="Selengut J."/>
            <person name="Ward N."/>
        </authorList>
    </citation>
    <scope>NUCLEOTIDE SEQUENCE [LARGE SCALE GENOMIC DNA]</scope>
    <source>
        <strain>ATCC 700808 / DSM 15171 / DSS-3</strain>
    </source>
</reference>
<reference key="2">
    <citation type="journal article" date="2014" name="Stand. Genomic Sci.">
        <title>An updated genome annotation for the model marine bacterium Ruegeria pomeroyi DSS-3.</title>
        <authorList>
            <person name="Rivers A.R."/>
            <person name="Smith C.B."/>
            <person name="Moran M.A."/>
        </authorList>
    </citation>
    <scope>GENOME REANNOTATION</scope>
    <source>
        <strain>ATCC 700808 / DSM 15171 / DSS-3</strain>
    </source>
</reference>
<name>PYRH_RUEPO</name>
<accession>Q5LSV4</accession>
<keyword id="KW-0021">Allosteric enzyme</keyword>
<keyword id="KW-0067">ATP-binding</keyword>
<keyword id="KW-0963">Cytoplasm</keyword>
<keyword id="KW-0418">Kinase</keyword>
<keyword id="KW-0547">Nucleotide-binding</keyword>
<keyword id="KW-0665">Pyrimidine biosynthesis</keyword>
<keyword id="KW-1185">Reference proteome</keyword>
<keyword id="KW-0808">Transferase</keyword>
<proteinExistence type="inferred from homology"/>
<evidence type="ECO:0000255" key="1">
    <source>
        <dbReference type="HAMAP-Rule" id="MF_01220"/>
    </source>
</evidence>
<protein>
    <recommendedName>
        <fullName evidence="1">Uridylate kinase</fullName>
        <shortName evidence="1">UK</shortName>
        <ecNumber evidence="1">2.7.4.22</ecNumber>
    </recommendedName>
    <alternativeName>
        <fullName evidence="1">Uridine monophosphate kinase</fullName>
        <shortName evidence="1">UMP kinase</shortName>
        <shortName evidence="1">UMPK</shortName>
    </alternativeName>
</protein>
<sequence length="251" mass="27130">MTSSTSPETPSDPSQTRYKRVMLKISGEALMGDQGFGLHPPTVKRIAHEIKTVHDMGVEICMVIGGGNIFRGLSGAAQGMERTTADYMGMLATVMNALGMQAALEGLGVFTRVISAIRMDEVAEPYIRRRAVRHLEKKRVCIFAAGTGNPYFTTDTAATLRANEMACEAIFMGKNGVDGVYDKDPALHDDAVRYDEISYDEVLAKRLKVMDASAIALARDNNLPLIVFSLDTAGGFRGILAGEGTYTKVQG</sequence>
<organism>
    <name type="scientific">Ruegeria pomeroyi (strain ATCC 700808 / DSM 15171 / DSS-3)</name>
    <name type="common">Silicibacter pomeroyi</name>
    <dbReference type="NCBI Taxonomy" id="246200"/>
    <lineage>
        <taxon>Bacteria</taxon>
        <taxon>Pseudomonadati</taxon>
        <taxon>Pseudomonadota</taxon>
        <taxon>Alphaproteobacteria</taxon>
        <taxon>Rhodobacterales</taxon>
        <taxon>Roseobacteraceae</taxon>
        <taxon>Ruegeria</taxon>
    </lineage>
</organism>
<dbReference type="EC" id="2.7.4.22" evidence="1"/>
<dbReference type="EMBL" id="CP000031">
    <property type="protein sequence ID" value="AAV94947.1"/>
    <property type="molecule type" value="Genomic_DNA"/>
</dbReference>
<dbReference type="RefSeq" id="WP_011047397.1">
    <property type="nucleotide sequence ID" value="NC_003911.12"/>
</dbReference>
<dbReference type="SMR" id="Q5LSV4"/>
<dbReference type="STRING" id="246200.SPO1662"/>
<dbReference type="PaxDb" id="246200-SPO1662"/>
<dbReference type="KEGG" id="sil:SPO1662"/>
<dbReference type="eggNOG" id="COG0528">
    <property type="taxonomic scope" value="Bacteria"/>
</dbReference>
<dbReference type="HOGENOM" id="CLU_033861_0_0_5"/>
<dbReference type="OrthoDB" id="9807458at2"/>
<dbReference type="UniPathway" id="UPA00159">
    <property type="reaction ID" value="UER00275"/>
</dbReference>
<dbReference type="Proteomes" id="UP000001023">
    <property type="component" value="Chromosome"/>
</dbReference>
<dbReference type="GO" id="GO:0005737">
    <property type="term" value="C:cytoplasm"/>
    <property type="evidence" value="ECO:0007669"/>
    <property type="project" value="UniProtKB-SubCell"/>
</dbReference>
<dbReference type="GO" id="GO:0005524">
    <property type="term" value="F:ATP binding"/>
    <property type="evidence" value="ECO:0007669"/>
    <property type="project" value="UniProtKB-KW"/>
</dbReference>
<dbReference type="GO" id="GO:0033862">
    <property type="term" value="F:UMP kinase activity"/>
    <property type="evidence" value="ECO:0007669"/>
    <property type="project" value="UniProtKB-EC"/>
</dbReference>
<dbReference type="GO" id="GO:0044210">
    <property type="term" value="P:'de novo' CTP biosynthetic process"/>
    <property type="evidence" value="ECO:0007669"/>
    <property type="project" value="UniProtKB-UniRule"/>
</dbReference>
<dbReference type="GO" id="GO:0006225">
    <property type="term" value="P:UDP biosynthetic process"/>
    <property type="evidence" value="ECO:0007669"/>
    <property type="project" value="TreeGrafter"/>
</dbReference>
<dbReference type="CDD" id="cd04254">
    <property type="entry name" value="AAK_UMPK-PyrH-Ec"/>
    <property type="match status" value="1"/>
</dbReference>
<dbReference type="FunFam" id="3.40.1160.10:FF:000001">
    <property type="entry name" value="Uridylate kinase"/>
    <property type="match status" value="1"/>
</dbReference>
<dbReference type="Gene3D" id="3.40.1160.10">
    <property type="entry name" value="Acetylglutamate kinase-like"/>
    <property type="match status" value="1"/>
</dbReference>
<dbReference type="HAMAP" id="MF_01220_B">
    <property type="entry name" value="PyrH_B"/>
    <property type="match status" value="1"/>
</dbReference>
<dbReference type="InterPro" id="IPR036393">
    <property type="entry name" value="AceGlu_kinase-like_sf"/>
</dbReference>
<dbReference type="InterPro" id="IPR001048">
    <property type="entry name" value="Asp/Glu/Uridylate_kinase"/>
</dbReference>
<dbReference type="InterPro" id="IPR011817">
    <property type="entry name" value="Uridylate_kinase"/>
</dbReference>
<dbReference type="InterPro" id="IPR015963">
    <property type="entry name" value="Uridylate_kinase_bac"/>
</dbReference>
<dbReference type="NCBIfam" id="TIGR02075">
    <property type="entry name" value="pyrH_bact"/>
    <property type="match status" value="1"/>
</dbReference>
<dbReference type="PANTHER" id="PTHR42833">
    <property type="entry name" value="URIDYLATE KINASE"/>
    <property type="match status" value="1"/>
</dbReference>
<dbReference type="PANTHER" id="PTHR42833:SF4">
    <property type="entry name" value="URIDYLATE KINASE PUMPKIN, CHLOROPLASTIC"/>
    <property type="match status" value="1"/>
</dbReference>
<dbReference type="Pfam" id="PF00696">
    <property type="entry name" value="AA_kinase"/>
    <property type="match status" value="1"/>
</dbReference>
<dbReference type="PIRSF" id="PIRSF005650">
    <property type="entry name" value="Uridylate_kin"/>
    <property type="match status" value="1"/>
</dbReference>
<dbReference type="SUPFAM" id="SSF53633">
    <property type="entry name" value="Carbamate kinase-like"/>
    <property type="match status" value="1"/>
</dbReference>
<feature type="chain" id="PRO_0000323951" description="Uridylate kinase">
    <location>
        <begin position="1"/>
        <end position="251"/>
    </location>
</feature>
<feature type="region of interest" description="Involved in allosteric activation by GTP" evidence="1">
    <location>
        <begin position="32"/>
        <end position="37"/>
    </location>
</feature>
<feature type="binding site" evidence="1">
    <location>
        <begin position="24"/>
        <end position="27"/>
    </location>
    <ligand>
        <name>ATP</name>
        <dbReference type="ChEBI" id="CHEBI:30616"/>
    </ligand>
</feature>
<feature type="binding site" evidence="1">
    <location>
        <position position="66"/>
    </location>
    <ligand>
        <name>UMP</name>
        <dbReference type="ChEBI" id="CHEBI:57865"/>
    </ligand>
</feature>
<feature type="binding site" evidence="1">
    <location>
        <position position="67"/>
    </location>
    <ligand>
        <name>ATP</name>
        <dbReference type="ChEBI" id="CHEBI:30616"/>
    </ligand>
</feature>
<feature type="binding site" evidence="1">
    <location>
        <position position="71"/>
    </location>
    <ligand>
        <name>ATP</name>
        <dbReference type="ChEBI" id="CHEBI:30616"/>
    </ligand>
</feature>
<feature type="binding site" evidence="1">
    <location>
        <position position="86"/>
    </location>
    <ligand>
        <name>UMP</name>
        <dbReference type="ChEBI" id="CHEBI:57865"/>
    </ligand>
</feature>
<feature type="binding site" evidence="1">
    <location>
        <begin position="147"/>
        <end position="154"/>
    </location>
    <ligand>
        <name>UMP</name>
        <dbReference type="ChEBI" id="CHEBI:57865"/>
    </ligand>
</feature>
<feature type="binding site" evidence="1">
    <location>
        <position position="175"/>
    </location>
    <ligand>
        <name>ATP</name>
        <dbReference type="ChEBI" id="CHEBI:30616"/>
    </ligand>
</feature>
<feature type="binding site" evidence="1">
    <location>
        <position position="181"/>
    </location>
    <ligand>
        <name>ATP</name>
        <dbReference type="ChEBI" id="CHEBI:30616"/>
    </ligand>
</feature>
<feature type="binding site" evidence="1">
    <location>
        <position position="184"/>
    </location>
    <ligand>
        <name>ATP</name>
        <dbReference type="ChEBI" id="CHEBI:30616"/>
    </ligand>
</feature>
<gene>
    <name evidence="1" type="primary">pyrH</name>
    <name type="ordered locus">SPO1662</name>
</gene>